<protein>
    <recommendedName>
        <fullName evidence="1">3-phosphoshikimate 1-carboxyvinyltransferase</fullName>
        <ecNumber evidence="1">2.5.1.19</ecNumber>
    </recommendedName>
    <alternativeName>
        <fullName evidence="1">5-enolpyruvylshikimate-3-phosphate synthase</fullName>
        <shortName evidence="1">EPSP synthase</shortName>
        <shortName evidence="1">EPSPS</shortName>
    </alternativeName>
</protein>
<accession>A0LLU6</accession>
<evidence type="ECO:0000255" key="1">
    <source>
        <dbReference type="HAMAP-Rule" id="MF_00210"/>
    </source>
</evidence>
<reference key="1">
    <citation type="submission" date="2006-10" db="EMBL/GenBank/DDBJ databases">
        <title>Complete sequence of Syntrophobacter fumaroxidans MPOB.</title>
        <authorList>
            <consortium name="US DOE Joint Genome Institute"/>
            <person name="Copeland A."/>
            <person name="Lucas S."/>
            <person name="Lapidus A."/>
            <person name="Barry K."/>
            <person name="Detter J.C."/>
            <person name="Glavina del Rio T."/>
            <person name="Hammon N."/>
            <person name="Israni S."/>
            <person name="Pitluck S."/>
            <person name="Goltsman E.G."/>
            <person name="Martinez M."/>
            <person name="Schmutz J."/>
            <person name="Larimer F."/>
            <person name="Land M."/>
            <person name="Hauser L."/>
            <person name="Kyrpides N."/>
            <person name="Kim E."/>
            <person name="Boone D.R."/>
            <person name="Brockman F."/>
            <person name="Culley D."/>
            <person name="Ferry J."/>
            <person name="Gunsalus R."/>
            <person name="McInerney M.J."/>
            <person name="Morrison M."/>
            <person name="Plugge C."/>
            <person name="Rohlin L."/>
            <person name="Scholten J."/>
            <person name="Sieber J."/>
            <person name="Stams A.J.M."/>
            <person name="Worm P."/>
            <person name="Henstra A.M."/>
            <person name="Richardson P."/>
        </authorList>
    </citation>
    <scope>NUCLEOTIDE SEQUENCE [LARGE SCALE GENOMIC DNA]</scope>
    <source>
        <strain>DSM 10017 / MPOB</strain>
    </source>
</reference>
<dbReference type="EC" id="2.5.1.19" evidence="1"/>
<dbReference type="EMBL" id="CP000478">
    <property type="protein sequence ID" value="ABK18398.1"/>
    <property type="molecule type" value="Genomic_DNA"/>
</dbReference>
<dbReference type="RefSeq" id="WP_011699565.1">
    <property type="nucleotide sequence ID" value="NC_008554.1"/>
</dbReference>
<dbReference type="SMR" id="A0LLU6"/>
<dbReference type="FunCoup" id="A0LLU6">
    <property type="interactions" value="489"/>
</dbReference>
<dbReference type="STRING" id="335543.Sfum_2720"/>
<dbReference type="KEGG" id="sfu:Sfum_2720"/>
<dbReference type="eggNOG" id="COG0128">
    <property type="taxonomic scope" value="Bacteria"/>
</dbReference>
<dbReference type="HOGENOM" id="CLU_024321_0_0_7"/>
<dbReference type="InParanoid" id="A0LLU6"/>
<dbReference type="OrthoDB" id="9809920at2"/>
<dbReference type="UniPathway" id="UPA00053">
    <property type="reaction ID" value="UER00089"/>
</dbReference>
<dbReference type="Proteomes" id="UP000001784">
    <property type="component" value="Chromosome"/>
</dbReference>
<dbReference type="GO" id="GO:0005737">
    <property type="term" value="C:cytoplasm"/>
    <property type="evidence" value="ECO:0007669"/>
    <property type="project" value="UniProtKB-SubCell"/>
</dbReference>
<dbReference type="GO" id="GO:0003866">
    <property type="term" value="F:3-phosphoshikimate 1-carboxyvinyltransferase activity"/>
    <property type="evidence" value="ECO:0007669"/>
    <property type="project" value="UniProtKB-UniRule"/>
</dbReference>
<dbReference type="GO" id="GO:0008652">
    <property type="term" value="P:amino acid biosynthetic process"/>
    <property type="evidence" value="ECO:0007669"/>
    <property type="project" value="UniProtKB-KW"/>
</dbReference>
<dbReference type="GO" id="GO:0009073">
    <property type="term" value="P:aromatic amino acid family biosynthetic process"/>
    <property type="evidence" value="ECO:0007669"/>
    <property type="project" value="UniProtKB-KW"/>
</dbReference>
<dbReference type="GO" id="GO:0009423">
    <property type="term" value="P:chorismate biosynthetic process"/>
    <property type="evidence" value="ECO:0007669"/>
    <property type="project" value="UniProtKB-UniRule"/>
</dbReference>
<dbReference type="CDD" id="cd01556">
    <property type="entry name" value="EPSP_synthase"/>
    <property type="match status" value="1"/>
</dbReference>
<dbReference type="Gene3D" id="3.65.10.10">
    <property type="entry name" value="Enolpyruvate transferase domain"/>
    <property type="match status" value="2"/>
</dbReference>
<dbReference type="HAMAP" id="MF_00210">
    <property type="entry name" value="EPSP_synth"/>
    <property type="match status" value="1"/>
</dbReference>
<dbReference type="InterPro" id="IPR001986">
    <property type="entry name" value="Enolpyruvate_Tfrase_dom"/>
</dbReference>
<dbReference type="InterPro" id="IPR036968">
    <property type="entry name" value="Enolpyruvate_Tfrase_sf"/>
</dbReference>
<dbReference type="InterPro" id="IPR006264">
    <property type="entry name" value="EPSP_synthase"/>
</dbReference>
<dbReference type="InterPro" id="IPR023193">
    <property type="entry name" value="EPSP_synthase_CS"/>
</dbReference>
<dbReference type="InterPro" id="IPR013792">
    <property type="entry name" value="RNA3'P_cycl/enolpyr_Trfase_a/b"/>
</dbReference>
<dbReference type="NCBIfam" id="TIGR01356">
    <property type="entry name" value="aroA"/>
    <property type="match status" value="1"/>
</dbReference>
<dbReference type="PANTHER" id="PTHR21090">
    <property type="entry name" value="AROM/DEHYDROQUINATE SYNTHASE"/>
    <property type="match status" value="1"/>
</dbReference>
<dbReference type="PANTHER" id="PTHR21090:SF5">
    <property type="entry name" value="PENTAFUNCTIONAL AROM POLYPEPTIDE"/>
    <property type="match status" value="1"/>
</dbReference>
<dbReference type="Pfam" id="PF00275">
    <property type="entry name" value="EPSP_synthase"/>
    <property type="match status" value="1"/>
</dbReference>
<dbReference type="PIRSF" id="PIRSF000505">
    <property type="entry name" value="EPSPS"/>
    <property type="match status" value="1"/>
</dbReference>
<dbReference type="SUPFAM" id="SSF55205">
    <property type="entry name" value="EPT/RTPC-like"/>
    <property type="match status" value="1"/>
</dbReference>
<dbReference type="PROSITE" id="PS00885">
    <property type="entry name" value="EPSP_SYNTHASE_2"/>
    <property type="match status" value="1"/>
</dbReference>
<name>AROA_SYNFM</name>
<comment type="function">
    <text evidence="1">Catalyzes the transfer of the enolpyruvyl moiety of phosphoenolpyruvate (PEP) to the 5-hydroxyl of shikimate-3-phosphate (S3P) to produce enolpyruvyl shikimate-3-phosphate and inorganic phosphate.</text>
</comment>
<comment type="catalytic activity">
    <reaction evidence="1">
        <text>3-phosphoshikimate + phosphoenolpyruvate = 5-O-(1-carboxyvinyl)-3-phosphoshikimate + phosphate</text>
        <dbReference type="Rhea" id="RHEA:21256"/>
        <dbReference type="ChEBI" id="CHEBI:43474"/>
        <dbReference type="ChEBI" id="CHEBI:57701"/>
        <dbReference type="ChEBI" id="CHEBI:58702"/>
        <dbReference type="ChEBI" id="CHEBI:145989"/>
        <dbReference type="EC" id="2.5.1.19"/>
    </reaction>
    <physiologicalReaction direction="left-to-right" evidence="1">
        <dbReference type="Rhea" id="RHEA:21257"/>
    </physiologicalReaction>
</comment>
<comment type="pathway">
    <text evidence="1">Metabolic intermediate biosynthesis; chorismate biosynthesis; chorismate from D-erythrose 4-phosphate and phosphoenolpyruvate: step 6/7.</text>
</comment>
<comment type="subunit">
    <text evidence="1">Monomer.</text>
</comment>
<comment type="subcellular location">
    <subcellularLocation>
        <location evidence="1">Cytoplasm</location>
    </subcellularLocation>
</comment>
<comment type="similarity">
    <text evidence="1">Belongs to the EPSP synthase family.</text>
</comment>
<organism>
    <name type="scientific">Syntrophobacter fumaroxidans (strain DSM 10017 / MPOB)</name>
    <dbReference type="NCBI Taxonomy" id="335543"/>
    <lineage>
        <taxon>Bacteria</taxon>
        <taxon>Pseudomonadati</taxon>
        <taxon>Thermodesulfobacteriota</taxon>
        <taxon>Syntrophobacteria</taxon>
        <taxon>Syntrophobacterales</taxon>
        <taxon>Syntrophobacteraceae</taxon>
        <taxon>Syntrophobacter</taxon>
    </lineage>
</organism>
<keyword id="KW-0028">Amino-acid biosynthesis</keyword>
<keyword id="KW-0057">Aromatic amino acid biosynthesis</keyword>
<keyword id="KW-0963">Cytoplasm</keyword>
<keyword id="KW-1185">Reference proteome</keyword>
<keyword id="KW-0808">Transferase</keyword>
<proteinExistence type="inferred from homology"/>
<feature type="chain" id="PRO_0000325393" description="3-phosphoshikimate 1-carboxyvinyltransferase">
    <location>
        <begin position="1"/>
        <end position="423"/>
    </location>
</feature>
<feature type="active site" description="Proton acceptor" evidence="1">
    <location>
        <position position="310"/>
    </location>
</feature>
<feature type="binding site" evidence="1">
    <location>
        <position position="21"/>
    </location>
    <ligand>
        <name>3-phosphoshikimate</name>
        <dbReference type="ChEBI" id="CHEBI:145989"/>
    </ligand>
</feature>
<feature type="binding site" evidence="1">
    <location>
        <position position="21"/>
    </location>
    <ligand>
        <name>phosphoenolpyruvate</name>
        <dbReference type="ChEBI" id="CHEBI:58702"/>
    </ligand>
</feature>
<feature type="binding site" evidence="1">
    <location>
        <position position="22"/>
    </location>
    <ligand>
        <name>3-phosphoshikimate</name>
        <dbReference type="ChEBI" id="CHEBI:145989"/>
    </ligand>
</feature>
<feature type="binding site" evidence="1">
    <location>
        <position position="26"/>
    </location>
    <ligand>
        <name>3-phosphoshikimate</name>
        <dbReference type="ChEBI" id="CHEBI:145989"/>
    </ligand>
</feature>
<feature type="binding site" evidence="1">
    <location>
        <position position="92"/>
    </location>
    <ligand>
        <name>phosphoenolpyruvate</name>
        <dbReference type="ChEBI" id="CHEBI:58702"/>
    </ligand>
</feature>
<feature type="binding site" evidence="1">
    <location>
        <position position="120"/>
    </location>
    <ligand>
        <name>phosphoenolpyruvate</name>
        <dbReference type="ChEBI" id="CHEBI:58702"/>
    </ligand>
</feature>
<feature type="binding site" evidence="1">
    <location>
        <position position="166"/>
    </location>
    <ligand>
        <name>3-phosphoshikimate</name>
        <dbReference type="ChEBI" id="CHEBI:145989"/>
    </ligand>
</feature>
<feature type="binding site" evidence="1">
    <location>
        <position position="168"/>
    </location>
    <ligand>
        <name>3-phosphoshikimate</name>
        <dbReference type="ChEBI" id="CHEBI:145989"/>
    </ligand>
</feature>
<feature type="binding site" evidence="1">
    <location>
        <position position="168"/>
    </location>
    <ligand>
        <name>phosphoenolpyruvate</name>
        <dbReference type="ChEBI" id="CHEBI:58702"/>
    </ligand>
</feature>
<feature type="binding site" evidence="1">
    <location>
        <position position="194"/>
    </location>
    <ligand>
        <name>3-phosphoshikimate</name>
        <dbReference type="ChEBI" id="CHEBI:145989"/>
    </ligand>
</feature>
<feature type="binding site" evidence="1">
    <location>
        <position position="310"/>
    </location>
    <ligand>
        <name>3-phosphoshikimate</name>
        <dbReference type="ChEBI" id="CHEBI:145989"/>
    </ligand>
</feature>
<feature type="binding site" evidence="1">
    <location>
        <position position="337"/>
    </location>
    <ligand>
        <name>3-phosphoshikimate</name>
        <dbReference type="ChEBI" id="CHEBI:145989"/>
    </ligand>
</feature>
<feature type="binding site" evidence="1">
    <location>
        <position position="341"/>
    </location>
    <ligand>
        <name>phosphoenolpyruvate</name>
        <dbReference type="ChEBI" id="CHEBI:58702"/>
    </ligand>
</feature>
<feature type="binding site" evidence="1">
    <location>
        <position position="384"/>
    </location>
    <ligand>
        <name>phosphoenolpyruvate</name>
        <dbReference type="ChEBI" id="CHEBI:58702"/>
    </ligand>
</feature>
<feature type="binding site" evidence="1">
    <location>
        <position position="409"/>
    </location>
    <ligand>
        <name>phosphoenolpyruvate</name>
        <dbReference type="ChEBI" id="CHEBI:58702"/>
    </ligand>
</feature>
<sequence>MRKTIEPISGIKAQLSVPGSKSITHRALMLAALADDESEIRNPLVADDTTITADALVQMGVGVQWKPGSVLVAPPSKRWSQPSEPILLGNSGTSTRLLLALAATGVGDFTFDGAPRLRQRPVKPLVSALEMLGARFDCTETDGFLPLRVIAHGLSGGKVLVDARQSGQFLSAVLMAAPCAGGEVTVEWLEPVASYPYVAMTLAMMGERGIDFRKDRANRVIVPAPQRYAGGRWTVEADCSSASYLWAAAALTGGDVLTHPLSPDSLQGDCRFLGILERMGCRVTWEEDGVRVVSSGELRPVDLDLNEMPDMVPTLAILAAFAGGVSRIRNVAHLRVKESDRLQAVSSELGKLGVPNRELPDGLEIRGGAATSPKVGIDPHDDHRIAMAFAVAGLRVGGVEIEDAEVVAKSFPTFWETFEKLKS</sequence>
<gene>
    <name evidence="1" type="primary">aroA</name>
    <name type="ordered locus">Sfum_2720</name>
</gene>